<proteinExistence type="inferred from homology"/>
<dbReference type="EC" id="4.2.1.90" evidence="1"/>
<dbReference type="EMBL" id="CP000468">
    <property type="protein sequence ID" value="ABJ01639.1"/>
    <property type="molecule type" value="Genomic_DNA"/>
</dbReference>
<dbReference type="SMR" id="A1AD99"/>
<dbReference type="KEGG" id="ecv:APECO1_4314"/>
<dbReference type="HOGENOM" id="CLU_030273_1_0_6"/>
<dbReference type="Proteomes" id="UP000008216">
    <property type="component" value="Chromosome"/>
</dbReference>
<dbReference type="GO" id="GO:0050032">
    <property type="term" value="F:L-rhamnonate dehydratase activity"/>
    <property type="evidence" value="ECO:0007669"/>
    <property type="project" value="UniProtKB-UniRule"/>
</dbReference>
<dbReference type="GO" id="GO:0000287">
    <property type="term" value="F:magnesium ion binding"/>
    <property type="evidence" value="ECO:0007669"/>
    <property type="project" value="UniProtKB-UniRule"/>
</dbReference>
<dbReference type="GO" id="GO:0009063">
    <property type="term" value="P:amino acid catabolic process"/>
    <property type="evidence" value="ECO:0007669"/>
    <property type="project" value="InterPro"/>
</dbReference>
<dbReference type="GO" id="GO:0016052">
    <property type="term" value="P:carbohydrate catabolic process"/>
    <property type="evidence" value="ECO:0007669"/>
    <property type="project" value="TreeGrafter"/>
</dbReference>
<dbReference type="CDD" id="cd03327">
    <property type="entry name" value="MR_like_2"/>
    <property type="match status" value="1"/>
</dbReference>
<dbReference type="FunFam" id="3.30.390.10:FF:000007">
    <property type="entry name" value="L-rhamnonate dehydratase"/>
    <property type="match status" value="1"/>
</dbReference>
<dbReference type="FunFam" id="3.20.20.120:FF:000005">
    <property type="entry name" value="Putative L-rhamnonate dehydratase"/>
    <property type="match status" value="1"/>
</dbReference>
<dbReference type="Gene3D" id="3.20.20.120">
    <property type="entry name" value="Enolase-like C-terminal domain"/>
    <property type="match status" value="1"/>
</dbReference>
<dbReference type="Gene3D" id="3.30.390.10">
    <property type="entry name" value="Enolase-like, N-terminal domain"/>
    <property type="match status" value="1"/>
</dbReference>
<dbReference type="HAMAP" id="MF_01288">
    <property type="entry name" value="Rhamnon_dehydrat"/>
    <property type="match status" value="1"/>
</dbReference>
<dbReference type="InterPro" id="IPR036849">
    <property type="entry name" value="Enolase-like_C_sf"/>
</dbReference>
<dbReference type="InterPro" id="IPR029017">
    <property type="entry name" value="Enolase-like_N"/>
</dbReference>
<dbReference type="InterPro" id="IPR029065">
    <property type="entry name" value="Enolase_C-like"/>
</dbReference>
<dbReference type="InterPro" id="IPR023444">
    <property type="entry name" value="L-Rhamnon_dehydrat"/>
</dbReference>
<dbReference type="InterPro" id="IPR018110">
    <property type="entry name" value="Mandel_Rmase/mucon_lact_enz_CS"/>
</dbReference>
<dbReference type="InterPro" id="IPR013342">
    <property type="entry name" value="Mandelate_racemase_C"/>
</dbReference>
<dbReference type="InterPro" id="IPR013341">
    <property type="entry name" value="Mandelate_racemase_N_dom"/>
</dbReference>
<dbReference type="InterPro" id="IPR046945">
    <property type="entry name" value="RHMD-like"/>
</dbReference>
<dbReference type="NCBIfam" id="NF011968">
    <property type="entry name" value="PRK15440.1"/>
    <property type="match status" value="1"/>
</dbReference>
<dbReference type="PANTHER" id="PTHR13794">
    <property type="entry name" value="ENOLASE SUPERFAMILY, MANDELATE RACEMASE"/>
    <property type="match status" value="1"/>
</dbReference>
<dbReference type="PANTHER" id="PTHR13794:SF58">
    <property type="entry name" value="MITOCHONDRIAL ENOLASE SUPERFAMILY MEMBER 1"/>
    <property type="match status" value="1"/>
</dbReference>
<dbReference type="Pfam" id="PF13378">
    <property type="entry name" value="MR_MLE_C"/>
    <property type="match status" value="1"/>
</dbReference>
<dbReference type="Pfam" id="PF02746">
    <property type="entry name" value="MR_MLE_N"/>
    <property type="match status" value="1"/>
</dbReference>
<dbReference type="SFLD" id="SFLDS00001">
    <property type="entry name" value="Enolase"/>
    <property type="match status" value="1"/>
</dbReference>
<dbReference type="SFLD" id="SFLDF00006">
    <property type="entry name" value="rhamnonate_dehydratase"/>
    <property type="match status" value="1"/>
</dbReference>
<dbReference type="SMART" id="SM00922">
    <property type="entry name" value="MR_MLE"/>
    <property type="match status" value="1"/>
</dbReference>
<dbReference type="SUPFAM" id="SSF51604">
    <property type="entry name" value="Enolase C-terminal domain-like"/>
    <property type="match status" value="1"/>
</dbReference>
<dbReference type="SUPFAM" id="SSF54826">
    <property type="entry name" value="Enolase N-terminal domain-like"/>
    <property type="match status" value="1"/>
</dbReference>
<dbReference type="PROSITE" id="PS00908">
    <property type="entry name" value="MR_MLE_1"/>
    <property type="match status" value="1"/>
</dbReference>
<reference key="1">
    <citation type="journal article" date="2007" name="J. Bacteriol.">
        <title>The genome sequence of avian pathogenic Escherichia coli strain O1:K1:H7 shares strong similarities with human extraintestinal pathogenic E. coli genomes.</title>
        <authorList>
            <person name="Johnson T.J."/>
            <person name="Kariyawasam S."/>
            <person name="Wannemuehler Y."/>
            <person name="Mangiamele P."/>
            <person name="Johnson S.J."/>
            <person name="Doetkott C."/>
            <person name="Skyberg J.A."/>
            <person name="Lynne A.M."/>
            <person name="Johnson J.R."/>
            <person name="Nolan L.K."/>
        </authorList>
    </citation>
    <scope>NUCLEOTIDE SEQUENCE [LARGE SCALE GENOMIC DNA]</scope>
</reference>
<protein>
    <recommendedName>
        <fullName evidence="1">L-rhamnonate dehydratase</fullName>
        <shortName evidence="1">RhamD</shortName>
        <ecNumber evidence="1">4.2.1.90</ecNumber>
    </recommendedName>
</protein>
<name>RHMD_ECOK1</name>
<comment type="function">
    <text evidence="1">Catalyzes the dehydration of L-rhamnonate to 2-keto-3-deoxy-L-rhamnonate (KDR).</text>
</comment>
<comment type="catalytic activity">
    <reaction evidence="1">
        <text>L-rhamnonate = 2-dehydro-3-deoxy-L-rhamnonate + H2O</text>
        <dbReference type="Rhea" id="RHEA:23080"/>
        <dbReference type="ChEBI" id="CHEBI:15377"/>
        <dbReference type="ChEBI" id="CHEBI:58118"/>
        <dbReference type="ChEBI" id="CHEBI:58371"/>
        <dbReference type="EC" id="4.2.1.90"/>
    </reaction>
</comment>
<comment type="cofactor">
    <cofactor evidence="1">
        <name>Mg(2+)</name>
        <dbReference type="ChEBI" id="CHEBI:18420"/>
    </cofactor>
    <text evidence="1">Binds 1 Mg(2+) ion per subunit.</text>
</comment>
<comment type="subunit">
    <text evidence="1">Homooctamer; tetramer of dimers.</text>
</comment>
<comment type="miscellaneous">
    <text evidence="1">Reaction proceeds via a syn dehydration.</text>
</comment>
<comment type="similarity">
    <text evidence="1">Belongs to the mandelate racemase/muconate lactonizing enzyme family. RhamD subfamily.</text>
</comment>
<accession>A1AD99</accession>
<evidence type="ECO:0000255" key="1">
    <source>
        <dbReference type="HAMAP-Rule" id="MF_01288"/>
    </source>
</evidence>
<gene>
    <name evidence="1" type="primary">rhmD</name>
    <name type="ordered locus">Ecok1_21450</name>
    <name type="ORF">APECO1_4314</name>
</gene>
<keyword id="KW-0456">Lyase</keyword>
<keyword id="KW-0460">Magnesium</keyword>
<keyword id="KW-0479">Metal-binding</keyword>
<keyword id="KW-1185">Reference proteome</keyword>
<organism>
    <name type="scientific">Escherichia coli O1:K1 / APEC</name>
    <dbReference type="NCBI Taxonomy" id="405955"/>
    <lineage>
        <taxon>Bacteria</taxon>
        <taxon>Pseudomonadati</taxon>
        <taxon>Pseudomonadota</taxon>
        <taxon>Gammaproteobacteria</taxon>
        <taxon>Enterobacterales</taxon>
        <taxon>Enterobacteriaceae</taxon>
        <taxon>Escherichia</taxon>
    </lineage>
</organism>
<sequence length="405" mass="44676">MENIMTLPKIKQVRAWFTGGAIAEKGAGGGDYHDQGANHWIDDHIATPMSKYRDYEQSRQSFGINVLGTLVVEVEAENGQTGFAVSTAGEMGCFIVEKHLNRFIEGKCVSDIKLIHDQMLNATLYYSGSGGLVMNTISCVDLALWDLFGKVVGLPVYKLLGGAVRDEIQFYATGARPDLAKEMGFIGGKMPTHWGPHDGDAGIRKDAAMVADMREKCGEDFWLMLDCWMSQDVNYATKLAHACAPYNLKWIEECLPPQQYEGYRELKHNAPAGMMVTSGEHHGTLQSFRTLSETGIDIMQPDVGWCGGLTTLVEIAAIAKSRGQLVVPHGSSVYSHHAVITFTNTPFSEFLMTSPDCSTMRPQFDPILLNEPVPVNGRIHKSVLDKPGFGVELNRDCNLKRPYSH</sequence>
<feature type="chain" id="PRO_0000351696" description="L-rhamnonate dehydratase">
    <location>
        <begin position="1"/>
        <end position="405"/>
    </location>
</feature>
<feature type="active site" description="Proton acceptor" evidence="1">
    <location>
        <position position="329"/>
    </location>
</feature>
<feature type="binding site" evidence="1">
    <location>
        <position position="33"/>
    </location>
    <ligand>
        <name>substrate</name>
    </ligand>
</feature>
<feature type="binding site" evidence="1">
    <location>
        <position position="59"/>
    </location>
    <ligand>
        <name>substrate</name>
    </ligand>
</feature>
<feature type="binding site" evidence="1">
    <location>
        <position position="226"/>
    </location>
    <ligand>
        <name>Mg(2+)</name>
        <dbReference type="ChEBI" id="CHEBI:18420"/>
    </ligand>
</feature>
<feature type="binding site" evidence="1">
    <location>
        <position position="252"/>
    </location>
    <ligand>
        <name>Mg(2+)</name>
        <dbReference type="ChEBI" id="CHEBI:18420"/>
    </ligand>
</feature>
<feature type="binding site" evidence="1">
    <location>
        <position position="280"/>
    </location>
    <ligand>
        <name>Mg(2+)</name>
        <dbReference type="ChEBI" id="CHEBI:18420"/>
    </ligand>
</feature>
<feature type="binding site" evidence="1">
    <location>
        <position position="349"/>
    </location>
    <ligand>
        <name>substrate</name>
    </ligand>
</feature>
<feature type="site" description="Increases basicity of active site His" evidence="1">
    <location>
        <position position="302"/>
    </location>
</feature>
<feature type="site" description="Transition state stabilizer" evidence="1">
    <location>
        <position position="349"/>
    </location>
</feature>